<accession>C1CX26</accession>
<comment type="similarity">
    <text evidence="1">Belongs to the dGTPase family. Type 2 subfamily.</text>
</comment>
<dbReference type="EMBL" id="CP001114">
    <property type="protein sequence ID" value="ACO46743.1"/>
    <property type="molecule type" value="Genomic_DNA"/>
</dbReference>
<dbReference type="RefSeq" id="WP_012693865.1">
    <property type="nucleotide sequence ID" value="NC_012526.1"/>
</dbReference>
<dbReference type="SMR" id="C1CX26"/>
<dbReference type="STRING" id="546414.Deide_17690"/>
<dbReference type="PaxDb" id="546414-Deide_17690"/>
<dbReference type="KEGG" id="ddr:Deide_17690"/>
<dbReference type="eggNOG" id="COG0232">
    <property type="taxonomic scope" value="Bacteria"/>
</dbReference>
<dbReference type="HOGENOM" id="CLU_028163_1_0_0"/>
<dbReference type="OrthoDB" id="9803619at2"/>
<dbReference type="Proteomes" id="UP000002208">
    <property type="component" value="Chromosome"/>
</dbReference>
<dbReference type="GO" id="GO:0008832">
    <property type="term" value="F:dGTPase activity"/>
    <property type="evidence" value="ECO:0007669"/>
    <property type="project" value="TreeGrafter"/>
</dbReference>
<dbReference type="GO" id="GO:0006203">
    <property type="term" value="P:dGTP catabolic process"/>
    <property type="evidence" value="ECO:0007669"/>
    <property type="project" value="TreeGrafter"/>
</dbReference>
<dbReference type="CDD" id="cd00077">
    <property type="entry name" value="HDc"/>
    <property type="match status" value="1"/>
</dbReference>
<dbReference type="FunFam" id="1.10.3210.10:FF:000024">
    <property type="entry name" value="Deoxyguanosinetriphosphate triphosphohydrolase-like protein"/>
    <property type="match status" value="1"/>
</dbReference>
<dbReference type="Gene3D" id="1.10.3210.10">
    <property type="entry name" value="Hypothetical protein af1432"/>
    <property type="match status" value="1"/>
</dbReference>
<dbReference type="HAMAP" id="MF_01212">
    <property type="entry name" value="dGTPase_type2"/>
    <property type="match status" value="1"/>
</dbReference>
<dbReference type="InterPro" id="IPR006261">
    <property type="entry name" value="dGTPase"/>
</dbReference>
<dbReference type="InterPro" id="IPR050135">
    <property type="entry name" value="dGTPase-like"/>
</dbReference>
<dbReference type="InterPro" id="IPR023023">
    <property type="entry name" value="dNTPase_2"/>
</dbReference>
<dbReference type="InterPro" id="IPR003607">
    <property type="entry name" value="HD/PDEase_dom"/>
</dbReference>
<dbReference type="InterPro" id="IPR006674">
    <property type="entry name" value="HD_domain"/>
</dbReference>
<dbReference type="InterPro" id="IPR026875">
    <property type="entry name" value="PHydrolase_assoc_dom"/>
</dbReference>
<dbReference type="NCBIfam" id="TIGR01353">
    <property type="entry name" value="dGTP_triPase"/>
    <property type="match status" value="1"/>
</dbReference>
<dbReference type="PANTHER" id="PTHR11373:SF43">
    <property type="entry name" value="DEOXYGUANOSINETRIPHOSPHATE TRIPHOSPHOHYDROLASE-LIKE PROTEIN"/>
    <property type="match status" value="1"/>
</dbReference>
<dbReference type="PANTHER" id="PTHR11373">
    <property type="entry name" value="DEOXYNUCLEOSIDE TRIPHOSPHATE TRIPHOSPHOHYDROLASE"/>
    <property type="match status" value="1"/>
</dbReference>
<dbReference type="Pfam" id="PF01966">
    <property type="entry name" value="HD"/>
    <property type="match status" value="1"/>
</dbReference>
<dbReference type="Pfam" id="PF13286">
    <property type="entry name" value="HD_assoc"/>
    <property type="match status" value="1"/>
</dbReference>
<dbReference type="SMART" id="SM00471">
    <property type="entry name" value="HDc"/>
    <property type="match status" value="1"/>
</dbReference>
<dbReference type="SUPFAM" id="SSF109604">
    <property type="entry name" value="HD-domain/PDEase-like"/>
    <property type="match status" value="1"/>
</dbReference>
<dbReference type="PROSITE" id="PS51831">
    <property type="entry name" value="HD"/>
    <property type="match status" value="1"/>
</dbReference>
<sequence length="380" mass="42330">MFSRTDLEAREAATLCPYATLSRDTRGREYPEAESATRTAFQKDRDRVLHTTAFRRLEAKTQVFLNVSYSGHADHYRTRLTHTLEVQQVARSVALNLGLNETLAETIALTHDLGHPPFGHAGERVLNALMHDHGGFNHNTQARRIVTHLESRYPDFPGLNLTLDTLDGLNKHDRAGIGHASLEAQLVDAADALAYTAHDLDDGLRSGLITPAQLQELPLWRELLARVPGTPAPLTSRERRILHRELLGWLIRDLTQASAQAIAQSGVQTAAEARAYPERLMTYSGAMRDLLRSAGTFLREHLYRHWRVEMQVEQAERVLTTLFRAYTARPSLLPPAASARAEHSGLPRAVCDHIAGMTDRYALETHAAITPPGAPTSWPH</sequence>
<keyword id="KW-0378">Hydrolase</keyword>
<keyword id="KW-1185">Reference proteome</keyword>
<proteinExistence type="inferred from homology"/>
<organism>
    <name type="scientific">Deinococcus deserti (strain DSM 17065 / CIP 109153 / LMG 22923 / VCD115)</name>
    <dbReference type="NCBI Taxonomy" id="546414"/>
    <lineage>
        <taxon>Bacteria</taxon>
        <taxon>Thermotogati</taxon>
        <taxon>Deinococcota</taxon>
        <taxon>Deinococci</taxon>
        <taxon>Deinococcales</taxon>
        <taxon>Deinococcaceae</taxon>
        <taxon>Deinococcus</taxon>
    </lineage>
</organism>
<gene>
    <name type="ordered locus">Deide_17690</name>
</gene>
<feature type="chain" id="PRO_1000213888" description="Deoxyguanosinetriphosphate triphosphohydrolase-like protein">
    <location>
        <begin position="1"/>
        <end position="380"/>
    </location>
</feature>
<feature type="domain" description="HD" evidence="2">
    <location>
        <begin position="79"/>
        <end position="196"/>
    </location>
</feature>
<name>DGTL1_DEIDV</name>
<reference key="1">
    <citation type="journal article" date="2009" name="PLoS Genet.">
        <title>Alliance of proteomics and genomics to unravel the specificities of Sahara bacterium Deinococcus deserti.</title>
        <authorList>
            <person name="de Groot A."/>
            <person name="Dulermo R."/>
            <person name="Ortet P."/>
            <person name="Blanchard L."/>
            <person name="Guerin P."/>
            <person name="Fernandez B."/>
            <person name="Vacherie B."/>
            <person name="Dossat C."/>
            <person name="Jolivet E."/>
            <person name="Siguier P."/>
            <person name="Chandler M."/>
            <person name="Barakat M."/>
            <person name="Dedieu A."/>
            <person name="Barbe V."/>
            <person name="Heulin T."/>
            <person name="Sommer S."/>
            <person name="Achouak W."/>
            <person name="Armengaud J."/>
        </authorList>
    </citation>
    <scope>NUCLEOTIDE SEQUENCE [LARGE SCALE GENOMIC DNA]</scope>
    <source>
        <strain>DSM 17065 / CIP 109153 / LMG 22923 / VCD115</strain>
    </source>
</reference>
<protein>
    <recommendedName>
        <fullName evidence="1">Deoxyguanosinetriphosphate triphosphohydrolase-like protein</fullName>
    </recommendedName>
</protein>
<evidence type="ECO:0000255" key="1">
    <source>
        <dbReference type="HAMAP-Rule" id="MF_01212"/>
    </source>
</evidence>
<evidence type="ECO:0000255" key="2">
    <source>
        <dbReference type="PROSITE-ProRule" id="PRU01175"/>
    </source>
</evidence>